<proteinExistence type="evidence at transcript level"/>
<sequence length="326" mass="37423">MYGIEYTTFLIYLISIILFNYILKSITRMMDYIIYKFLLIVTITSIVVNAQNYGVNLPITGSMDTSYVNATKGKPFLTSTLCLYYPTEARTEINDNEWTNTLSQLFLTKGWPTGSVYFKEYDDIATFSVDPQLYCDYNIVLMRYNSNLELDMSELANLILNEWLCNPMDITLYYYQQTDEANKWIAMGQSCTIKVCPLNTQTLGIGCQTTNTRTFEEVATAEKLVITDVVDGVNHKLDVTTATCTIRNCKKLGPRENVAVIQVGGADILDITSDPTTNPQTERIMRINWKKWWQVFYTIVDYVNQIVQAMSKRSRSLNSAAFYYRV</sequence>
<protein>
    <recommendedName>
        <fullName evidence="2">Outer capsid glycoprotein VP7</fullName>
    </recommendedName>
</protein>
<organismHost>
    <name type="scientific">Bos taurus</name>
    <name type="common">Bovine</name>
    <dbReference type="NCBI Taxonomy" id="9913"/>
</organismHost>
<keyword id="KW-0024">Alternative initiation</keyword>
<keyword id="KW-0106">Calcium</keyword>
<keyword id="KW-0167">Capsid protein</keyword>
<keyword id="KW-1015">Disulfide bond</keyword>
<keyword id="KW-0325">Glycoprotein</keyword>
<keyword id="KW-1038">Host endoplasmic reticulum</keyword>
<keyword id="KW-0945">Host-virus interaction</keyword>
<keyword id="KW-0479">Metal-binding</keyword>
<keyword id="KW-1152">Outer capsid protein</keyword>
<keyword id="KW-0732">Signal</keyword>
<keyword id="KW-1146">T=13 icosahedral capsid protein</keyword>
<keyword id="KW-0946">Virion</keyword>
<dbReference type="EMBL" id="D01056">
    <property type="protein sequence ID" value="BAA00858.1"/>
    <property type="molecule type" value="mRNA"/>
</dbReference>
<dbReference type="SMR" id="Q00254"/>
<dbReference type="GO" id="GO:0044166">
    <property type="term" value="C:host cell endoplasmic reticulum lumen"/>
    <property type="evidence" value="ECO:0007669"/>
    <property type="project" value="UniProtKB-SubCell"/>
</dbReference>
<dbReference type="GO" id="GO:0039621">
    <property type="term" value="C:T=13 icosahedral viral capsid"/>
    <property type="evidence" value="ECO:0007669"/>
    <property type="project" value="UniProtKB-UniRule"/>
</dbReference>
<dbReference type="GO" id="GO:0039624">
    <property type="term" value="C:viral outer capsid"/>
    <property type="evidence" value="ECO:0007669"/>
    <property type="project" value="UniProtKB-UniRule"/>
</dbReference>
<dbReference type="GO" id="GO:0046872">
    <property type="term" value="F:metal ion binding"/>
    <property type="evidence" value="ECO:0007669"/>
    <property type="project" value="UniProtKB-KW"/>
</dbReference>
<dbReference type="FunFam" id="2.60.120.800:FF:000001">
    <property type="entry name" value="Outer capsid glycoprotein VP7"/>
    <property type="match status" value="1"/>
</dbReference>
<dbReference type="Gene3D" id="3.40.50.11130">
    <property type="entry name" value="Glycoprotein VP7, domain 1"/>
    <property type="match status" value="1"/>
</dbReference>
<dbReference type="Gene3D" id="2.60.120.800">
    <property type="entry name" value="Rotavirus outer-layer protein VP7, domain 2"/>
    <property type="match status" value="1"/>
</dbReference>
<dbReference type="HAMAP" id="MF_04130">
    <property type="entry name" value="Rota_VP7"/>
    <property type="match status" value="1"/>
</dbReference>
<dbReference type="HAMAP" id="MF_04131">
    <property type="entry name" value="Rota_VP7_A"/>
    <property type="match status" value="1"/>
</dbReference>
<dbReference type="InterPro" id="IPR001963">
    <property type="entry name" value="VP7"/>
</dbReference>
<dbReference type="InterPro" id="IPR042207">
    <property type="entry name" value="VP7_1"/>
</dbReference>
<dbReference type="InterPro" id="IPR042210">
    <property type="entry name" value="VP7_2"/>
</dbReference>
<dbReference type="Pfam" id="PF00434">
    <property type="entry name" value="VP7"/>
    <property type="match status" value="1"/>
</dbReference>
<organism>
    <name type="scientific">Rotavirus A (isolate RVA/Cow/Japan/KK3/1983/G10P8[11])</name>
    <name type="common">RV-A</name>
    <dbReference type="NCBI Taxonomy" id="1835657"/>
    <lineage>
        <taxon>Viruses</taxon>
        <taxon>Riboviria</taxon>
        <taxon>Orthornavirae</taxon>
        <taxon>Duplornaviricota</taxon>
        <taxon>Resentoviricetes</taxon>
        <taxon>Reovirales</taxon>
        <taxon>Sedoreoviridae</taxon>
        <taxon>Rotavirus</taxon>
        <taxon>Rotavirus A</taxon>
    </lineage>
</organism>
<comment type="function">
    <text evidence="2">Calcium-binding protein that interacts with rotavirus cell receptors once the initial attachment by VP4 has been achieved. Rotavirus attachment and entry into the host cell probably involves multiple sequential contacts between the outer capsid proteins VP4 and VP7, and the cell receptors. Following entry into the host cell, low intracellular or intravesicular Ca(2+) concentration probably causes the calcium-stabilized VP7 trimers to dissociate from the virion. This step is probably necessary for the membrane-disrupting entry step and the release of VP4, which is locked onto the virion by VP7.</text>
</comment>
<comment type="subunit">
    <text evidence="2">Homotrimer; disulfide-linked. 2 Ca(2+) ions bound at each subunit interface in the trimer hold the trimer together. Interacts with the intermediate capsid protein VP6. Interacts with the outer capsid protein VP5*.</text>
</comment>
<comment type="subcellular location">
    <subcellularLocation>
        <location evidence="2">Virion</location>
    </subcellularLocation>
    <subcellularLocation>
        <location evidence="2">Host endoplasmic reticulum lumen</location>
    </subcellularLocation>
    <text evidence="2">The outer layer contains 780 copies of VP7, grouped as 260 trimers. Immature double-layered particles assembled in the cytoplasm bud across the membrane of the endoplasmic reticulum, acquiring during this process a transient lipid membrane that is modified with the ER resident viral glycoproteins NSP4 and VP7; these enveloped particles also contain VP4. As the particles move towards the interior of the ER cisternae, the transient lipid membrane and the non-structural protein NSP4 are lost, while the virus surface proteins VP4 and VP7 rearrange to form the outermost virus protein layer, yielding mature infectious triple-layered particles.</text>
</comment>
<comment type="alternative products">
    <event type="alternative initiation"/>
    <isoform>
        <id>Q00254-1</id>
        <name>1</name>
        <sequence type="displayed"/>
    </isoform>
    <isoform>
        <id>Q00254-2</id>
        <name>2</name>
        <sequence type="described" ref="VSP_038580"/>
    </isoform>
</comment>
<comment type="PTM">
    <text evidence="2">N-glycosylated.</text>
</comment>
<comment type="PTM">
    <text evidence="2">The N-terminus is blocked possibly by pyroglutamic acid.</text>
</comment>
<comment type="miscellaneous">
    <text evidence="2">Some rotavirus strains are neuraminidase-sensitive and require sialic acid to attach to the cell surface. Some rotavirus strains are integrin-dependent. Some rotavirus strains depend on ganglioside for their entry into the host cell. Hsp70 also seems to be involved in the entry of some strains.</text>
</comment>
<comment type="miscellaneous">
    <text evidence="2">In group A rotaviruses, VP7 defines the G serotype.</text>
</comment>
<comment type="miscellaneous">
    <molecule>Isoform 2</molecule>
    <text evidence="3">Produced by alternative initiation at Met-30 of isoform 1.</text>
</comment>
<comment type="similarity">
    <text evidence="2">Belongs to the rotavirus VP7 family.</text>
</comment>
<feature type="signal peptide" evidence="2">
    <location>
        <begin position="1"/>
        <end position="50"/>
    </location>
</feature>
<feature type="chain" id="PRO_0000149584" description="Outer capsid glycoprotein VP7" evidence="2">
    <location>
        <begin position="51"/>
        <end position="326"/>
    </location>
</feature>
<feature type="region of interest" description="CNP motif; interaction with ITGAV/ITGB3" evidence="2">
    <location>
        <begin position="165"/>
        <end position="167"/>
    </location>
</feature>
<feature type="region of interest" description="LVD motif; interaction with ITGA4/ITGB1 heterodimer" evidence="2">
    <location>
        <begin position="237"/>
        <end position="239"/>
    </location>
</feature>
<feature type="region of interest" description="GPR motif; interaction with ITGAX/ITGB2" evidence="2">
    <location>
        <begin position="253"/>
        <end position="255"/>
    </location>
</feature>
<feature type="binding site" evidence="2">
    <location>
        <position position="95"/>
    </location>
    <ligand>
        <name>Ca(2+)</name>
        <dbReference type="ChEBI" id="CHEBI:29108"/>
        <label>1</label>
    </ligand>
</feature>
<feature type="binding site" evidence="2">
    <location>
        <position position="177"/>
    </location>
    <ligand>
        <name>Ca(2+)</name>
        <dbReference type="ChEBI" id="CHEBI:29108"/>
        <label>2</label>
    </ligand>
</feature>
<feature type="binding site" evidence="2">
    <location>
        <position position="206"/>
    </location>
    <ligand>
        <name>Ca(2+)</name>
        <dbReference type="ChEBI" id="CHEBI:29108"/>
        <label>1</label>
    </ligand>
</feature>
<feature type="binding site" evidence="2">
    <location>
        <position position="214"/>
    </location>
    <ligand>
        <name>Ca(2+)</name>
        <dbReference type="ChEBI" id="CHEBI:29108"/>
        <label>1</label>
    </ligand>
</feature>
<feature type="binding site" evidence="2">
    <location>
        <position position="216"/>
    </location>
    <ligand>
        <name>Ca(2+)</name>
        <dbReference type="ChEBI" id="CHEBI:29108"/>
        <label>1</label>
    </ligand>
</feature>
<feature type="binding site" evidence="2">
    <location>
        <position position="228"/>
    </location>
    <ligand>
        <name>Ca(2+)</name>
        <dbReference type="ChEBI" id="CHEBI:29108"/>
        <label>2</label>
    </ligand>
</feature>
<feature type="binding site" evidence="2">
    <location>
        <position position="229"/>
    </location>
    <ligand>
        <name>Ca(2+)</name>
        <dbReference type="ChEBI" id="CHEBI:29108"/>
        <label>2</label>
    </ligand>
</feature>
<feature type="binding site" evidence="2">
    <location>
        <position position="231"/>
    </location>
    <ligand>
        <name>Ca(2+)</name>
        <dbReference type="ChEBI" id="CHEBI:29108"/>
        <label>2</label>
    </ligand>
</feature>
<feature type="binding site" evidence="2">
    <location>
        <position position="301"/>
    </location>
    <ligand>
        <name>Ca(2+)</name>
        <dbReference type="ChEBI" id="CHEBI:29108"/>
        <label>2</label>
    </ligand>
</feature>
<feature type="glycosylation site" description="N-linked (GlcNAc...) asparagine; by host" evidence="1">
    <location>
        <position position="69"/>
    </location>
</feature>
<feature type="disulfide bond" evidence="2">
    <location>
        <begin position="82"/>
        <end position="135"/>
    </location>
</feature>
<feature type="disulfide bond" evidence="2">
    <location>
        <begin position="165"/>
        <end position="249"/>
    </location>
</feature>
<feature type="disulfide bond" evidence="2">
    <location>
        <begin position="191"/>
        <end position="244"/>
    </location>
</feature>
<feature type="disulfide bond" evidence="2">
    <location>
        <begin position="196"/>
        <end position="207"/>
    </location>
</feature>
<feature type="splice variant" id="VSP_038580" description="In isoform 2." evidence="3">
    <location>
        <begin position="1"/>
        <end position="29"/>
    </location>
</feature>
<evidence type="ECO:0000255" key="1"/>
<evidence type="ECO:0000255" key="2">
    <source>
        <dbReference type="HAMAP-Rule" id="MF_04131"/>
    </source>
</evidence>
<evidence type="ECO:0000305" key="3"/>
<accession>Q00254</accession>
<reference key="1">
    <citation type="journal article" date="1991" name="J. Gen. Virol.">
        <title>Molecular and antigenic analyses of serotypes 8 and 10 of bovine rotaviruses in Thailand.</title>
        <authorList>
            <person name="Taniguchi K."/>
            <person name="Urasawa T."/>
            <person name="Pongsuwanna Y."/>
            <person name="Choonthanom M."/>
            <person name="Jayavasu C."/>
            <person name="Urasawa S."/>
        </authorList>
    </citation>
    <scope>NUCLEOTIDE SEQUENCE [MRNA]</scope>
</reference>
<name>VP7_ROTBK</name>